<dbReference type="EC" id="3.6.1.-" evidence="1"/>
<dbReference type="EMBL" id="CP000901">
    <property type="protein sequence ID" value="ABX86457.1"/>
    <property type="molecule type" value="Genomic_DNA"/>
</dbReference>
<dbReference type="RefSeq" id="WP_002211381.1">
    <property type="nucleotide sequence ID" value="NZ_CP009935.1"/>
</dbReference>
<dbReference type="SMR" id="A9R2R6"/>
<dbReference type="GeneID" id="57973848"/>
<dbReference type="KEGG" id="ypg:YpAngola_A3241"/>
<dbReference type="PATRIC" id="fig|349746.12.peg.4305"/>
<dbReference type="GO" id="GO:0005737">
    <property type="term" value="C:cytoplasm"/>
    <property type="evidence" value="ECO:0007669"/>
    <property type="project" value="TreeGrafter"/>
</dbReference>
<dbReference type="GO" id="GO:0034353">
    <property type="term" value="F:mRNA 5'-diphosphatase activity"/>
    <property type="evidence" value="ECO:0007669"/>
    <property type="project" value="TreeGrafter"/>
</dbReference>
<dbReference type="GO" id="GO:0006402">
    <property type="term" value="P:mRNA catabolic process"/>
    <property type="evidence" value="ECO:0007669"/>
    <property type="project" value="TreeGrafter"/>
</dbReference>
<dbReference type="CDD" id="cd03671">
    <property type="entry name" value="NUDIX_Ap4A_hydrolase_plant_like"/>
    <property type="match status" value="1"/>
</dbReference>
<dbReference type="FunFam" id="3.90.79.10:FF:000001">
    <property type="entry name" value="RNA pyrophosphohydrolase"/>
    <property type="match status" value="1"/>
</dbReference>
<dbReference type="Gene3D" id="3.90.79.10">
    <property type="entry name" value="Nucleoside Triphosphate Pyrophosphohydrolase"/>
    <property type="match status" value="1"/>
</dbReference>
<dbReference type="HAMAP" id="MF_00298">
    <property type="entry name" value="Nudix_RppH"/>
    <property type="match status" value="1"/>
</dbReference>
<dbReference type="InterPro" id="IPR020476">
    <property type="entry name" value="Nudix_hydrolase"/>
</dbReference>
<dbReference type="InterPro" id="IPR015797">
    <property type="entry name" value="NUDIX_hydrolase-like_dom_sf"/>
</dbReference>
<dbReference type="InterPro" id="IPR020084">
    <property type="entry name" value="NUDIX_hydrolase_CS"/>
</dbReference>
<dbReference type="InterPro" id="IPR000086">
    <property type="entry name" value="NUDIX_hydrolase_dom"/>
</dbReference>
<dbReference type="InterPro" id="IPR022927">
    <property type="entry name" value="RppH"/>
</dbReference>
<dbReference type="NCBIfam" id="NF001934">
    <property type="entry name" value="PRK00714.1-1"/>
    <property type="match status" value="1"/>
</dbReference>
<dbReference type="NCBIfam" id="NF001937">
    <property type="entry name" value="PRK00714.1-4"/>
    <property type="match status" value="1"/>
</dbReference>
<dbReference type="NCBIfam" id="NF001938">
    <property type="entry name" value="PRK00714.1-5"/>
    <property type="match status" value="1"/>
</dbReference>
<dbReference type="PANTHER" id="PTHR23114">
    <property type="entry name" value="M7GPPPN-MRNA HYDROLASE"/>
    <property type="match status" value="1"/>
</dbReference>
<dbReference type="PANTHER" id="PTHR23114:SF17">
    <property type="entry name" value="M7GPPPN-MRNA HYDROLASE"/>
    <property type="match status" value="1"/>
</dbReference>
<dbReference type="Pfam" id="PF00293">
    <property type="entry name" value="NUDIX"/>
    <property type="match status" value="1"/>
</dbReference>
<dbReference type="PRINTS" id="PR00502">
    <property type="entry name" value="NUDIXFAMILY"/>
</dbReference>
<dbReference type="SUPFAM" id="SSF55811">
    <property type="entry name" value="Nudix"/>
    <property type="match status" value="1"/>
</dbReference>
<dbReference type="PROSITE" id="PS51462">
    <property type="entry name" value="NUDIX"/>
    <property type="match status" value="1"/>
</dbReference>
<dbReference type="PROSITE" id="PS00893">
    <property type="entry name" value="NUDIX_BOX"/>
    <property type="match status" value="1"/>
</dbReference>
<accession>A9R2R6</accession>
<gene>
    <name evidence="1" type="primary">rppH</name>
    <name evidence="1" type="synonym">nudH</name>
    <name type="ordered locus">YpAngola_A3241</name>
</gene>
<protein>
    <recommendedName>
        <fullName evidence="1">RNA pyrophosphohydrolase</fullName>
        <ecNumber evidence="1">3.6.1.-</ecNumber>
    </recommendedName>
    <alternativeName>
        <fullName evidence="1">(Di)nucleoside polyphosphate hydrolase</fullName>
    </alternativeName>
</protein>
<sequence length="175" mass="20893">MIDDDGYRPNVGIVICNRQGEVLWARRYGQHSWQFPQGGINPGETPEQAMYRELFEEVGLNKKDVRILASTRNWLRYKLPKRLVRWDTKPVCIGQKQRWFLLQLMCNEAEINMQRSSTPEFDGWRWVSYWYPVRQVVSFKRDVYRRVMKEFAATVMPVQEVAPPRVPPAYRRKRG</sequence>
<name>RPPH_YERPG</name>
<proteinExistence type="inferred from homology"/>
<evidence type="ECO:0000255" key="1">
    <source>
        <dbReference type="HAMAP-Rule" id="MF_00298"/>
    </source>
</evidence>
<keyword id="KW-0378">Hydrolase</keyword>
<organism>
    <name type="scientific">Yersinia pestis bv. Antiqua (strain Angola)</name>
    <dbReference type="NCBI Taxonomy" id="349746"/>
    <lineage>
        <taxon>Bacteria</taxon>
        <taxon>Pseudomonadati</taxon>
        <taxon>Pseudomonadota</taxon>
        <taxon>Gammaproteobacteria</taxon>
        <taxon>Enterobacterales</taxon>
        <taxon>Yersiniaceae</taxon>
        <taxon>Yersinia</taxon>
    </lineage>
</organism>
<comment type="function">
    <text evidence="1">Accelerates the degradation of transcripts by removing pyrophosphate from the 5'-end of triphosphorylated RNA, leading to a more labile monophosphorylated state that can stimulate subsequent ribonuclease cleavage.</text>
</comment>
<comment type="cofactor">
    <cofactor evidence="1">
        <name>a divalent metal cation</name>
        <dbReference type="ChEBI" id="CHEBI:60240"/>
    </cofactor>
</comment>
<comment type="similarity">
    <text evidence="1">Belongs to the Nudix hydrolase family. RppH subfamily.</text>
</comment>
<feature type="chain" id="PRO_1000115309" description="RNA pyrophosphohydrolase">
    <location>
        <begin position="1"/>
        <end position="175"/>
    </location>
</feature>
<feature type="domain" description="Nudix hydrolase" evidence="1">
    <location>
        <begin position="6"/>
        <end position="149"/>
    </location>
</feature>
<feature type="short sequence motif" description="Nudix box">
    <location>
        <begin position="38"/>
        <end position="59"/>
    </location>
</feature>
<reference key="1">
    <citation type="journal article" date="2010" name="J. Bacteriol.">
        <title>Genome sequence of the deep-rooted Yersinia pestis strain Angola reveals new insights into the evolution and pangenome of the plague bacterium.</title>
        <authorList>
            <person name="Eppinger M."/>
            <person name="Worsham P.L."/>
            <person name="Nikolich M.P."/>
            <person name="Riley D.R."/>
            <person name="Sebastian Y."/>
            <person name="Mou S."/>
            <person name="Achtman M."/>
            <person name="Lindler L.E."/>
            <person name="Ravel J."/>
        </authorList>
    </citation>
    <scope>NUCLEOTIDE SEQUENCE [LARGE SCALE GENOMIC DNA]</scope>
    <source>
        <strain>Angola</strain>
    </source>
</reference>